<sequence length="134" mass="13820">MVSLGLVVARFNDSVTEPMAEAAREAATDRDAVIVDEVSVPGAYDSPLAADRLARRDDVDAVAVVGAIVTGDTDHDHVIASATADKLTQVSLDRDTPVTFGVSGPGMSGAEARERIDKGADAAEAAIDLADELD</sequence>
<evidence type="ECO:0000255" key="1">
    <source>
        <dbReference type="HAMAP-Rule" id="MF_00178"/>
    </source>
</evidence>
<dbReference type="EC" id="2.5.1.78" evidence="1"/>
<dbReference type="EMBL" id="CP001365">
    <property type="protein sequence ID" value="ACM56430.1"/>
    <property type="molecule type" value="Genomic_DNA"/>
</dbReference>
<dbReference type="RefSeq" id="WP_015909581.1">
    <property type="nucleotide sequence ID" value="NC_012029.1"/>
</dbReference>
<dbReference type="SMR" id="B9LUV3"/>
<dbReference type="GeneID" id="7400797"/>
<dbReference type="KEGG" id="hla:Hlac_0831"/>
<dbReference type="eggNOG" id="arCOG01323">
    <property type="taxonomic scope" value="Archaea"/>
</dbReference>
<dbReference type="HOGENOM" id="CLU_089358_3_0_2"/>
<dbReference type="UniPathway" id="UPA00275">
    <property type="reaction ID" value="UER00404"/>
</dbReference>
<dbReference type="Proteomes" id="UP000000740">
    <property type="component" value="Chromosome 1"/>
</dbReference>
<dbReference type="GO" id="GO:0009349">
    <property type="term" value="C:riboflavin synthase complex"/>
    <property type="evidence" value="ECO:0007669"/>
    <property type="project" value="InterPro"/>
</dbReference>
<dbReference type="GO" id="GO:0000906">
    <property type="term" value="F:6,7-dimethyl-8-ribityllumazine synthase activity"/>
    <property type="evidence" value="ECO:0007669"/>
    <property type="project" value="UniProtKB-UniRule"/>
</dbReference>
<dbReference type="GO" id="GO:0009231">
    <property type="term" value="P:riboflavin biosynthetic process"/>
    <property type="evidence" value="ECO:0007669"/>
    <property type="project" value="UniProtKB-UniRule"/>
</dbReference>
<dbReference type="Gene3D" id="3.40.50.960">
    <property type="entry name" value="Lumazine/riboflavin synthase"/>
    <property type="match status" value="1"/>
</dbReference>
<dbReference type="HAMAP" id="MF_00178">
    <property type="entry name" value="Lumazine_synth"/>
    <property type="match status" value="1"/>
</dbReference>
<dbReference type="InterPro" id="IPR034964">
    <property type="entry name" value="LS"/>
</dbReference>
<dbReference type="InterPro" id="IPR002180">
    <property type="entry name" value="LS/RS"/>
</dbReference>
<dbReference type="InterPro" id="IPR036467">
    <property type="entry name" value="LS/RS_sf"/>
</dbReference>
<dbReference type="NCBIfam" id="TIGR00114">
    <property type="entry name" value="lumazine-synth"/>
    <property type="match status" value="1"/>
</dbReference>
<dbReference type="PANTHER" id="PTHR21058:SF0">
    <property type="entry name" value="6,7-DIMETHYL-8-RIBITYLLUMAZINE SYNTHASE"/>
    <property type="match status" value="1"/>
</dbReference>
<dbReference type="PANTHER" id="PTHR21058">
    <property type="entry name" value="6,7-DIMETHYL-8-RIBITYLLUMAZINE SYNTHASE DMRL SYNTHASE LUMAZINE SYNTHASE"/>
    <property type="match status" value="1"/>
</dbReference>
<dbReference type="Pfam" id="PF00885">
    <property type="entry name" value="DMRL_synthase"/>
    <property type="match status" value="1"/>
</dbReference>
<dbReference type="SUPFAM" id="SSF52121">
    <property type="entry name" value="Lumazine synthase"/>
    <property type="match status" value="1"/>
</dbReference>
<name>RISB_HALLT</name>
<feature type="chain" id="PRO_1000195518" description="6,7-dimethyl-8-ribityllumazine synthase">
    <location>
        <begin position="1"/>
        <end position="134"/>
    </location>
</feature>
<feature type="active site" description="Proton donor" evidence="1">
    <location>
        <position position="75"/>
    </location>
</feature>
<feature type="binding site" evidence="1">
    <location>
        <position position="11"/>
    </location>
    <ligand>
        <name>5-amino-6-(D-ribitylamino)uracil</name>
        <dbReference type="ChEBI" id="CHEBI:15934"/>
    </ligand>
</feature>
<feature type="binding site" evidence="1">
    <location>
        <begin position="43"/>
        <end position="45"/>
    </location>
    <ligand>
        <name>5-amino-6-(D-ribitylamino)uracil</name>
        <dbReference type="ChEBI" id="CHEBI:15934"/>
    </ligand>
</feature>
<feature type="binding site" evidence="1">
    <location>
        <begin position="67"/>
        <end position="69"/>
    </location>
    <ligand>
        <name>5-amino-6-(D-ribitylamino)uracil</name>
        <dbReference type="ChEBI" id="CHEBI:15934"/>
    </ligand>
</feature>
<feature type="binding site" evidence="1">
    <location>
        <begin position="72"/>
        <end position="73"/>
    </location>
    <ligand>
        <name>(2S)-2-hydroxy-3-oxobutyl phosphate</name>
        <dbReference type="ChEBI" id="CHEBI:58830"/>
    </ligand>
</feature>
<feature type="binding site" evidence="1">
    <location>
        <position position="100"/>
    </location>
    <ligand>
        <name>5-amino-6-(D-ribitylamino)uracil</name>
        <dbReference type="ChEBI" id="CHEBI:15934"/>
    </ligand>
</feature>
<feature type="binding site" evidence="1">
    <location>
        <position position="115"/>
    </location>
    <ligand>
        <name>(2S)-2-hydroxy-3-oxobutyl phosphate</name>
        <dbReference type="ChEBI" id="CHEBI:58830"/>
    </ligand>
</feature>
<comment type="function">
    <text evidence="1">Catalyzes the formation of 6,7-dimethyl-8-ribityllumazine by condensation of 5-amino-6-(D-ribitylamino)uracil with 3,4-dihydroxy-2-butanone 4-phosphate. This is the penultimate step in the biosynthesis of riboflavin.</text>
</comment>
<comment type="catalytic activity">
    <reaction evidence="1">
        <text>(2S)-2-hydroxy-3-oxobutyl phosphate + 5-amino-6-(D-ribitylamino)uracil = 6,7-dimethyl-8-(1-D-ribityl)lumazine + phosphate + 2 H2O + H(+)</text>
        <dbReference type="Rhea" id="RHEA:26152"/>
        <dbReference type="ChEBI" id="CHEBI:15377"/>
        <dbReference type="ChEBI" id="CHEBI:15378"/>
        <dbReference type="ChEBI" id="CHEBI:15934"/>
        <dbReference type="ChEBI" id="CHEBI:43474"/>
        <dbReference type="ChEBI" id="CHEBI:58201"/>
        <dbReference type="ChEBI" id="CHEBI:58830"/>
        <dbReference type="EC" id="2.5.1.78"/>
    </reaction>
</comment>
<comment type="pathway">
    <text evidence="1">Cofactor biosynthesis; riboflavin biosynthesis; riboflavin from 2-hydroxy-3-oxobutyl phosphate and 5-amino-6-(D-ribitylamino)uracil: step 1/2.</text>
</comment>
<comment type="similarity">
    <text evidence="1">Belongs to the DMRL synthase family.</text>
</comment>
<organism>
    <name type="scientific">Halorubrum lacusprofundi (strain ATCC 49239 / DSM 5036 / JCM 8891 / ACAM 34)</name>
    <dbReference type="NCBI Taxonomy" id="416348"/>
    <lineage>
        <taxon>Archaea</taxon>
        <taxon>Methanobacteriati</taxon>
        <taxon>Methanobacteriota</taxon>
        <taxon>Stenosarchaea group</taxon>
        <taxon>Halobacteria</taxon>
        <taxon>Halobacteriales</taxon>
        <taxon>Haloferacaceae</taxon>
        <taxon>Halorubrum</taxon>
    </lineage>
</organism>
<reference key="1">
    <citation type="journal article" date="2016" name="Stand. Genomic Sci.">
        <title>Complete genome sequence of the Antarctic Halorubrum lacusprofundi type strain ACAM 34.</title>
        <authorList>
            <person name="Anderson I.J."/>
            <person name="DasSarma P."/>
            <person name="Lucas S."/>
            <person name="Copeland A."/>
            <person name="Lapidus A."/>
            <person name="Del Rio T.G."/>
            <person name="Tice H."/>
            <person name="Dalin E."/>
            <person name="Bruce D.C."/>
            <person name="Goodwin L."/>
            <person name="Pitluck S."/>
            <person name="Sims D."/>
            <person name="Brettin T.S."/>
            <person name="Detter J.C."/>
            <person name="Han C.S."/>
            <person name="Larimer F."/>
            <person name="Hauser L."/>
            <person name="Land M."/>
            <person name="Ivanova N."/>
            <person name="Richardson P."/>
            <person name="Cavicchioli R."/>
            <person name="DasSarma S."/>
            <person name="Woese C.R."/>
            <person name="Kyrpides N.C."/>
        </authorList>
    </citation>
    <scope>NUCLEOTIDE SEQUENCE [LARGE SCALE GENOMIC DNA]</scope>
    <source>
        <strain>ATCC 49239 / DSM 5036 / JCM 8891 / ACAM 34</strain>
    </source>
</reference>
<keyword id="KW-1185">Reference proteome</keyword>
<keyword id="KW-0686">Riboflavin biosynthesis</keyword>
<keyword id="KW-0808">Transferase</keyword>
<proteinExistence type="inferred from homology"/>
<accession>B9LUV3</accession>
<gene>
    <name evidence="1" type="primary">ribH</name>
    <name type="ordered locus">Hlac_0831</name>
</gene>
<protein>
    <recommendedName>
        <fullName evidence="1">6,7-dimethyl-8-ribityllumazine synthase</fullName>
        <shortName evidence="1">DMRL synthase</shortName>
        <shortName evidence="1">LS</shortName>
        <shortName evidence="1">Lumazine synthase</shortName>
        <ecNumber evidence="1">2.5.1.78</ecNumber>
    </recommendedName>
</protein>